<comment type="function">
    <text evidence="1">Mitochondrial scaffold protein, of the core iron-sulfur cluster (ISC) assembly complex, that provides the structural architecture on which the [2Fe-2S] clusters are assembled. The core iron-sulfur cluster (ISC) assembly complex is involved in the de novo synthesis of a [2Fe-2S] cluster, the first step of the mitochondrial iron-sulfur protein biogenesis. This process is initiated by the cysteine desulfurase complex (NFS1:LYRM4:NDUFAB1) that produces persulfide which is delivered on the scaffold protein ISCU in a FXN-dependent manner. Then this complex is stabilized by FDX2 which provides reducing equivalents to accomplish the [2Fe-2S] cluster assembly. Finally, the [2Fe-2S] cluster is transferred from ISCU to chaperone proteins, including HSCB, HSPA9 and GLRX5. Exists as two slow interchanging conformational states, a structured (S) and disordered (D) form. May modulate NFS1 desulfurase activity in a zinc-dependent manner. Modulates the interaction between FXN and the cysteine desulfurase complex.</text>
</comment>
<comment type="subunit">
    <text evidence="1 3 4">Homodimer; Tyr-36-mediated dimerization of two iron- and sulfide-containing ISCU subunit bind to the cysteine desulfurase complex (By similarity). Component of the mitochondrial core iron-sulfur cluster (ISC) complex composed of NFS1, LYRM4, NDUFAB1, ISCU, FXN, and FDX2; this complex is a heterohexamer containing two copies of each monomer (By similarity). Interacts (D-state) with NFS1 (homodimer form); each monomer interacts with the C-terminal regions of each NFS1 monomer. Interacts (monomer form) with FXN (via ferrous form); the interaction is possible when both are bound to the dimeric form of the cysteine desulfurase complex (NFS1:LYRM4) and enhances FXN interaction to the dimeric form of the cysteine desulfurase complex (NFS1:LYRM4). Interacts with GLRX5. Interacts (D-state) with HSPA9. Interacts (S-state) with HSCB; this interaction stimulates the ATPase activity of HSPA9 (By similarity). Component of a complex composed of FXN, NFS1, LYRM4 and ISCU (PubMed:21298097, PubMed:25597503).</text>
</comment>
<comment type="subcellular location">
    <subcellularLocation>
        <location evidence="1">Mitochondrion</location>
    </subcellularLocation>
</comment>
<comment type="PTM">
    <text evidence="4">Cysteine persulfide is reduced by thiol-containing molecules such as glutathione and L-cysteine.</text>
</comment>
<comment type="PTM">
    <text evidence="1">Phosphorylation at Ser-15 is required for ISCU protein stabilization in the cytosol, whereas dephosphorylation of Ser-15, due to the inhibition of mTORC1 (mammalian target of rapamycin complex 1) complex, leads to degradation of the precursor form and ultimately to a decrease in the mitochondrial mature form.</text>
</comment>
<comment type="similarity">
    <text evidence="5">Belongs to the NifU family.</text>
</comment>
<comment type="caution">
    <text evidence="1">Previous publications report that ISCU could provide the architecture on which both [2Fe-2S] and [4Fe-4S] clusters could be assembled (By similarity). Recent reports confirm that only [2Fe-2S] clusters are formed by the core ISC assembly complex (By similarity).</text>
</comment>
<feature type="transit peptide" description="Mitochondrion" evidence="2">
    <location>
        <begin position="1"/>
        <end position="35"/>
    </location>
</feature>
<feature type="chain" id="PRO_0000019693" description="Iron-sulfur cluster assembly enzyme ISCU">
    <location>
        <begin position="36"/>
        <end position="168"/>
    </location>
</feature>
<feature type="active site" description="Cysteine persulfide intermediate" evidence="4">
    <location>
        <position position="70"/>
    </location>
</feature>
<feature type="active site" description="Cysteine persulfide intermediate" evidence="4">
    <location>
        <position position="139"/>
    </location>
</feature>
<feature type="binding site" evidence="1">
    <location>
        <position position="72"/>
    </location>
    <ligand>
        <name>Zn(2+)</name>
        <dbReference type="ChEBI" id="CHEBI:29105"/>
    </ligand>
</feature>
<feature type="binding site" evidence="1">
    <location>
        <position position="96"/>
    </location>
    <ligand>
        <name>Zn(2+)</name>
        <dbReference type="ChEBI" id="CHEBI:29105"/>
    </ligand>
</feature>
<feature type="binding site" evidence="1">
    <location>
        <position position="139"/>
    </location>
    <ligand>
        <name>Zn(2+)</name>
        <dbReference type="ChEBI" id="CHEBI:29105"/>
    </ligand>
</feature>
<feature type="site" description="Mediates ISCU dimerization and de novo [2Fe-2S] cluster assembly" evidence="1">
    <location>
        <position position="36"/>
    </location>
</feature>
<feature type="modified residue" description="Phosphoserine" evidence="1">
    <location>
        <position position="15"/>
    </location>
</feature>
<feature type="modified residue" description="Cysteine persulfide" evidence="4">
    <location>
        <position position="70"/>
    </location>
</feature>
<feature type="modified residue" description="Cysteine persulfide" evidence="4">
    <location>
        <position position="139"/>
    </location>
</feature>
<feature type="mutagenesis site" description="Does not affect core iron sulfur assembly complex formation. Abolishes sulhydratation." evidence="4">
    <original>C</original>
    <variation>S</variation>
    <location>
        <position position="70"/>
    </location>
</feature>
<feature type="mutagenesis site" description="Does not affect core iron sulfur assembly complex formation. Abolishes sulhydratation." evidence="4">
    <original>C</original>
    <variation>S</variation>
    <location>
        <position position="139"/>
    </location>
</feature>
<feature type="strand" evidence="8">
    <location>
        <begin position="58"/>
        <end position="67"/>
    </location>
</feature>
<feature type="turn" evidence="8">
    <location>
        <begin position="68"/>
        <end position="71"/>
    </location>
</feature>
<feature type="strand" evidence="8">
    <location>
        <begin position="72"/>
        <end position="80"/>
    </location>
</feature>
<feature type="strand" evidence="8">
    <location>
        <begin position="82"/>
        <end position="92"/>
    </location>
</feature>
<feature type="helix" evidence="8">
    <location>
        <begin position="97"/>
        <end position="110"/>
    </location>
</feature>
<feature type="helix" evidence="8">
    <location>
        <begin position="115"/>
        <end position="120"/>
    </location>
</feature>
<feature type="helix" evidence="8">
    <location>
        <begin position="123"/>
        <end position="130"/>
    </location>
</feature>
<feature type="helix" evidence="8">
    <location>
        <begin position="134"/>
        <end position="136"/>
    </location>
</feature>
<feature type="helix" evidence="8">
    <location>
        <begin position="137"/>
        <end position="159"/>
    </location>
</feature>
<reference key="1">
    <citation type="journal article" date="2005" name="Science">
        <title>The transcriptional landscape of the mammalian genome.</title>
        <authorList>
            <person name="Carninci P."/>
            <person name="Kasukawa T."/>
            <person name="Katayama S."/>
            <person name="Gough J."/>
            <person name="Frith M.C."/>
            <person name="Maeda N."/>
            <person name="Oyama R."/>
            <person name="Ravasi T."/>
            <person name="Lenhard B."/>
            <person name="Wells C."/>
            <person name="Kodzius R."/>
            <person name="Shimokawa K."/>
            <person name="Bajic V.B."/>
            <person name="Brenner S.E."/>
            <person name="Batalov S."/>
            <person name="Forrest A.R."/>
            <person name="Zavolan M."/>
            <person name="Davis M.J."/>
            <person name="Wilming L.G."/>
            <person name="Aidinis V."/>
            <person name="Allen J.E."/>
            <person name="Ambesi-Impiombato A."/>
            <person name="Apweiler R."/>
            <person name="Aturaliya R.N."/>
            <person name="Bailey T.L."/>
            <person name="Bansal M."/>
            <person name="Baxter L."/>
            <person name="Beisel K.W."/>
            <person name="Bersano T."/>
            <person name="Bono H."/>
            <person name="Chalk A.M."/>
            <person name="Chiu K.P."/>
            <person name="Choudhary V."/>
            <person name="Christoffels A."/>
            <person name="Clutterbuck D.R."/>
            <person name="Crowe M.L."/>
            <person name="Dalla E."/>
            <person name="Dalrymple B.P."/>
            <person name="de Bono B."/>
            <person name="Della Gatta G."/>
            <person name="di Bernardo D."/>
            <person name="Down T."/>
            <person name="Engstrom P."/>
            <person name="Fagiolini M."/>
            <person name="Faulkner G."/>
            <person name="Fletcher C.F."/>
            <person name="Fukushima T."/>
            <person name="Furuno M."/>
            <person name="Futaki S."/>
            <person name="Gariboldi M."/>
            <person name="Georgii-Hemming P."/>
            <person name="Gingeras T.R."/>
            <person name="Gojobori T."/>
            <person name="Green R.E."/>
            <person name="Gustincich S."/>
            <person name="Harbers M."/>
            <person name="Hayashi Y."/>
            <person name="Hensch T.K."/>
            <person name="Hirokawa N."/>
            <person name="Hill D."/>
            <person name="Huminiecki L."/>
            <person name="Iacono M."/>
            <person name="Ikeo K."/>
            <person name="Iwama A."/>
            <person name="Ishikawa T."/>
            <person name="Jakt M."/>
            <person name="Kanapin A."/>
            <person name="Katoh M."/>
            <person name="Kawasawa Y."/>
            <person name="Kelso J."/>
            <person name="Kitamura H."/>
            <person name="Kitano H."/>
            <person name="Kollias G."/>
            <person name="Krishnan S.P."/>
            <person name="Kruger A."/>
            <person name="Kummerfeld S.K."/>
            <person name="Kurochkin I.V."/>
            <person name="Lareau L.F."/>
            <person name="Lazarevic D."/>
            <person name="Lipovich L."/>
            <person name="Liu J."/>
            <person name="Liuni S."/>
            <person name="McWilliam S."/>
            <person name="Madan Babu M."/>
            <person name="Madera M."/>
            <person name="Marchionni L."/>
            <person name="Matsuda H."/>
            <person name="Matsuzawa S."/>
            <person name="Miki H."/>
            <person name="Mignone F."/>
            <person name="Miyake S."/>
            <person name="Morris K."/>
            <person name="Mottagui-Tabar S."/>
            <person name="Mulder N."/>
            <person name="Nakano N."/>
            <person name="Nakauchi H."/>
            <person name="Ng P."/>
            <person name="Nilsson R."/>
            <person name="Nishiguchi S."/>
            <person name="Nishikawa S."/>
            <person name="Nori F."/>
            <person name="Ohara O."/>
            <person name="Okazaki Y."/>
            <person name="Orlando V."/>
            <person name="Pang K.C."/>
            <person name="Pavan W.J."/>
            <person name="Pavesi G."/>
            <person name="Pesole G."/>
            <person name="Petrovsky N."/>
            <person name="Piazza S."/>
            <person name="Reed J."/>
            <person name="Reid J.F."/>
            <person name="Ring B.Z."/>
            <person name="Ringwald M."/>
            <person name="Rost B."/>
            <person name="Ruan Y."/>
            <person name="Salzberg S.L."/>
            <person name="Sandelin A."/>
            <person name="Schneider C."/>
            <person name="Schoenbach C."/>
            <person name="Sekiguchi K."/>
            <person name="Semple C.A."/>
            <person name="Seno S."/>
            <person name="Sessa L."/>
            <person name="Sheng Y."/>
            <person name="Shibata Y."/>
            <person name="Shimada H."/>
            <person name="Shimada K."/>
            <person name="Silva D."/>
            <person name="Sinclair B."/>
            <person name="Sperling S."/>
            <person name="Stupka E."/>
            <person name="Sugiura K."/>
            <person name="Sultana R."/>
            <person name="Takenaka Y."/>
            <person name="Taki K."/>
            <person name="Tammoja K."/>
            <person name="Tan S.L."/>
            <person name="Tang S."/>
            <person name="Taylor M.S."/>
            <person name="Tegner J."/>
            <person name="Teichmann S.A."/>
            <person name="Ueda H.R."/>
            <person name="van Nimwegen E."/>
            <person name="Verardo R."/>
            <person name="Wei C.L."/>
            <person name="Yagi K."/>
            <person name="Yamanishi H."/>
            <person name="Zabarovsky E."/>
            <person name="Zhu S."/>
            <person name="Zimmer A."/>
            <person name="Hide W."/>
            <person name="Bult C."/>
            <person name="Grimmond S.M."/>
            <person name="Teasdale R.D."/>
            <person name="Liu E.T."/>
            <person name="Brusic V."/>
            <person name="Quackenbush J."/>
            <person name="Wahlestedt C."/>
            <person name="Mattick J.S."/>
            <person name="Hume D.A."/>
            <person name="Kai C."/>
            <person name="Sasaki D."/>
            <person name="Tomaru Y."/>
            <person name="Fukuda S."/>
            <person name="Kanamori-Katayama M."/>
            <person name="Suzuki M."/>
            <person name="Aoki J."/>
            <person name="Arakawa T."/>
            <person name="Iida J."/>
            <person name="Imamura K."/>
            <person name="Itoh M."/>
            <person name="Kato T."/>
            <person name="Kawaji H."/>
            <person name="Kawagashira N."/>
            <person name="Kawashima T."/>
            <person name="Kojima M."/>
            <person name="Kondo S."/>
            <person name="Konno H."/>
            <person name="Nakano K."/>
            <person name="Ninomiya N."/>
            <person name="Nishio T."/>
            <person name="Okada M."/>
            <person name="Plessy C."/>
            <person name="Shibata K."/>
            <person name="Shiraki T."/>
            <person name="Suzuki S."/>
            <person name="Tagami M."/>
            <person name="Waki K."/>
            <person name="Watahiki A."/>
            <person name="Okamura-Oho Y."/>
            <person name="Suzuki H."/>
            <person name="Kawai J."/>
            <person name="Hayashizaki Y."/>
        </authorList>
    </citation>
    <scope>NUCLEOTIDE SEQUENCE [LARGE SCALE MRNA]</scope>
    <source>
        <strain>C57BL/6J</strain>
        <tissue>Hippocampus</tissue>
        <tissue>Thymus</tissue>
        <tissue>Tongue</tissue>
    </source>
</reference>
<reference key="2">
    <citation type="journal article" date="2004" name="Genome Res.">
        <title>The status, quality, and expansion of the NIH full-length cDNA project: the Mammalian Gene Collection (MGC).</title>
        <authorList>
            <consortium name="The MGC Project Team"/>
        </authorList>
    </citation>
    <scope>NUCLEOTIDE SEQUENCE [LARGE SCALE MRNA]</scope>
    <source>
        <strain>FVB/N-3</strain>
        <tissue>Mammary gland</tissue>
        <tissue>Mammary tumor</tissue>
    </source>
</reference>
<reference key="3">
    <citation type="journal article" date="2010" name="Cell">
        <title>A tissue-specific atlas of mouse protein phosphorylation and expression.</title>
        <authorList>
            <person name="Huttlin E.L."/>
            <person name="Jedrychowski M.P."/>
            <person name="Elias J.E."/>
            <person name="Goswami T."/>
            <person name="Rad R."/>
            <person name="Beausoleil S.A."/>
            <person name="Villen J."/>
            <person name="Haas W."/>
            <person name="Sowa M.E."/>
            <person name="Gygi S.P."/>
        </authorList>
    </citation>
    <scope>IDENTIFICATION BY MASS SPECTROMETRY [LARGE SCALE ANALYSIS]</scope>
    <source>
        <tissue>Brain</tissue>
        <tissue>Brown adipose tissue</tissue>
        <tissue>Heart</tissue>
        <tissue>Kidney</tissue>
        <tissue>Liver</tissue>
        <tissue>Lung</tissue>
        <tissue>Spleen</tissue>
        <tissue>Testis</tissue>
    </source>
</reference>
<reference key="4">
    <citation type="journal article" date="2011" name="PLoS ONE">
        <title>Mammalian frataxin: an essential function for cellular viability through an interaction with a preformed ISCU/NFS1/ISD11 iron-sulfur assembly complex.</title>
        <authorList>
            <person name="Schmucker S."/>
            <person name="Martelli A."/>
            <person name="Colin F."/>
            <person name="Page A."/>
            <person name="Wattenhofer-Donze M."/>
            <person name="Reutenauer L."/>
            <person name="Puccio H."/>
        </authorList>
    </citation>
    <scope>INTERACTION WITH FXN</scope>
    <scope>SUBUNIT</scope>
</reference>
<reference key="5">
    <citation type="journal article" date="2015" name="Nat. Commun.">
        <title>Mammalian frataxin directly enhances sulfur transfer of NFS1 persulfide to both ISCU and free thiols.</title>
        <authorList>
            <person name="Parent A."/>
            <person name="Elduque X."/>
            <person name="Cornu D."/>
            <person name="Belot L."/>
            <person name="Le Caer J.P."/>
            <person name="Grandas A."/>
            <person name="Toledano M.B."/>
            <person name="D'Autreaux B."/>
        </authorList>
    </citation>
    <scope>SUBUNIT</scope>
    <scope>SULFHYDRATION AT CYS-70 AND CYS-139</scope>
    <scope>IDENTIFICATION BY MASS SPECTROMETRY</scope>
    <scope>MUTAGENESIS OF CYS-70 AND CYS-139</scope>
    <scope>ACTIVE SITE</scope>
</reference>
<reference evidence="7" key="6">
    <citation type="submission" date="2004-05" db="PDB data bank">
        <title>Solution structure of Iron-sulfur cluster protein U (IscU).</title>
        <authorList>
            <person name="Nakanishi T."/>
            <person name="Tomizawa T."/>
            <person name="Koshiba S."/>
            <person name="Inoue M."/>
            <person name="Kigawa T."/>
            <person name="Yokoyama S."/>
        </authorList>
    </citation>
    <scope>STRUCTURE BY NMR OF 45-161</scope>
</reference>
<accession>Q9D7P6</accession>
<accession>Q4VBC7</accession>
<accession>Q8K344</accession>
<gene>
    <name evidence="6" type="primary">Iscu</name>
    <name type="synonym">Nifun</name>
</gene>
<organism>
    <name type="scientific">Mus musculus</name>
    <name type="common">Mouse</name>
    <dbReference type="NCBI Taxonomy" id="10090"/>
    <lineage>
        <taxon>Eukaryota</taxon>
        <taxon>Metazoa</taxon>
        <taxon>Chordata</taxon>
        <taxon>Craniata</taxon>
        <taxon>Vertebrata</taxon>
        <taxon>Euteleostomi</taxon>
        <taxon>Mammalia</taxon>
        <taxon>Eutheria</taxon>
        <taxon>Euarchontoglires</taxon>
        <taxon>Glires</taxon>
        <taxon>Rodentia</taxon>
        <taxon>Myomorpha</taxon>
        <taxon>Muroidea</taxon>
        <taxon>Muridae</taxon>
        <taxon>Murinae</taxon>
        <taxon>Mus</taxon>
        <taxon>Mus</taxon>
    </lineage>
</organism>
<keyword id="KW-0002">3D-structure</keyword>
<keyword id="KW-0408">Iron</keyword>
<keyword id="KW-0479">Metal-binding</keyword>
<keyword id="KW-0496">Mitochondrion</keyword>
<keyword id="KW-0597">Phosphoprotein</keyword>
<keyword id="KW-1185">Reference proteome</keyword>
<keyword id="KW-0809">Transit peptide</keyword>
<keyword id="KW-0862">Zinc</keyword>
<protein>
    <recommendedName>
        <fullName evidence="5">Iron-sulfur cluster assembly enzyme ISCU</fullName>
    </recommendedName>
    <alternativeName>
        <fullName>NifU-like N-terminal domain-containing protein</fullName>
    </alternativeName>
    <alternativeName>
        <fullName>NifU-like protein</fullName>
    </alternativeName>
</protein>
<name>ISCU_MOUSE</name>
<dbReference type="EMBL" id="AK009021">
    <property type="protein sequence ID" value="BAB26031.1"/>
    <property type="molecule type" value="mRNA"/>
</dbReference>
<dbReference type="EMBL" id="AK039834">
    <property type="protein sequence ID" value="BAC30464.1"/>
    <property type="molecule type" value="mRNA"/>
</dbReference>
<dbReference type="EMBL" id="AK083247">
    <property type="protein sequence ID" value="BAC38830.1"/>
    <property type="molecule type" value="mRNA"/>
</dbReference>
<dbReference type="EMBL" id="BC028800">
    <property type="protein sequence ID" value="AAH28800.1"/>
    <property type="molecule type" value="mRNA"/>
</dbReference>
<dbReference type="EMBL" id="BC048409">
    <property type="protein sequence ID" value="AAH48409.1"/>
    <property type="molecule type" value="mRNA"/>
</dbReference>
<dbReference type="EMBL" id="BC096049">
    <property type="protein sequence ID" value="AAH96049.1"/>
    <property type="molecule type" value="mRNA"/>
</dbReference>
<dbReference type="CCDS" id="CCDS19553.1"/>
<dbReference type="RefSeq" id="NP_079802.1">
    <property type="nucleotide sequence ID" value="NM_025526.5"/>
</dbReference>
<dbReference type="PDB" id="1WFZ">
    <property type="method" value="NMR"/>
    <property type="chains" value="A=45-161"/>
</dbReference>
<dbReference type="PDBsum" id="1WFZ"/>
<dbReference type="BMRB" id="Q9D7P6"/>
<dbReference type="SMR" id="Q9D7P6"/>
<dbReference type="BioGRID" id="211430">
    <property type="interactions" value="6"/>
</dbReference>
<dbReference type="ComplexPortal" id="CPX-5823">
    <property type="entry name" value="Mitochondrial NIAUFX iron-sulfur cluster assembly complex"/>
</dbReference>
<dbReference type="CORUM" id="Q9D7P6"/>
<dbReference type="FunCoup" id="Q9D7P6">
    <property type="interactions" value="3041"/>
</dbReference>
<dbReference type="STRING" id="10090.ENSMUSP00000026937"/>
<dbReference type="iPTMnet" id="Q9D7P6"/>
<dbReference type="PhosphoSitePlus" id="Q9D7P6"/>
<dbReference type="SwissPalm" id="Q9D7P6"/>
<dbReference type="jPOST" id="Q9D7P6"/>
<dbReference type="PaxDb" id="10090-ENSMUSP00000026937"/>
<dbReference type="PeptideAtlas" id="Q9D7P6"/>
<dbReference type="ProteomicsDB" id="269099"/>
<dbReference type="Pumba" id="Q9D7P6"/>
<dbReference type="DNASU" id="66383"/>
<dbReference type="Ensembl" id="ENSMUST00000026937.12">
    <property type="protein sequence ID" value="ENSMUSP00000026937.6"/>
    <property type="gene ID" value="ENSMUSG00000025825.13"/>
</dbReference>
<dbReference type="GeneID" id="66383"/>
<dbReference type="KEGG" id="mmu:66383"/>
<dbReference type="UCSC" id="uc008yyp.1">
    <property type="organism name" value="mouse"/>
</dbReference>
<dbReference type="AGR" id="MGI:1913633"/>
<dbReference type="CTD" id="23479"/>
<dbReference type="MGI" id="MGI:1913633">
    <property type="gene designation" value="Iscu"/>
</dbReference>
<dbReference type="VEuPathDB" id="HostDB:ENSMUSG00000025825"/>
<dbReference type="eggNOG" id="KOG3361">
    <property type="taxonomic scope" value="Eukaryota"/>
</dbReference>
<dbReference type="GeneTree" id="ENSGT00940000166181"/>
<dbReference type="HOGENOM" id="CLU_079283_1_2_1"/>
<dbReference type="InParanoid" id="Q9D7P6"/>
<dbReference type="OMA" id="SMVTEMV"/>
<dbReference type="OrthoDB" id="1925777at2759"/>
<dbReference type="PhylomeDB" id="Q9D7P6"/>
<dbReference type="TreeFam" id="TF105422"/>
<dbReference type="Reactome" id="R-MMU-1362409">
    <property type="pathway name" value="Mitochondrial iron-sulfur cluster biogenesis"/>
</dbReference>
<dbReference type="Reactome" id="R-MMU-9854311">
    <property type="pathway name" value="Maturation of TCA enzymes and regulation of TCA cycle"/>
</dbReference>
<dbReference type="Reactome" id="R-MMU-9865881">
    <property type="pathway name" value="Complex III assembly"/>
</dbReference>
<dbReference type="BioGRID-ORCS" id="66383">
    <property type="hits" value="26 hits in 72 CRISPR screens"/>
</dbReference>
<dbReference type="ChiTaRS" id="Iscu">
    <property type="organism name" value="mouse"/>
</dbReference>
<dbReference type="EvolutionaryTrace" id="Q9D7P6"/>
<dbReference type="PRO" id="PR:Q9D7P6"/>
<dbReference type="Proteomes" id="UP000000589">
    <property type="component" value="Chromosome 5"/>
</dbReference>
<dbReference type="RNAct" id="Q9D7P6">
    <property type="molecule type" value="protein"/>
</dbReference>
<dbReference type="Bgee" id="ENSMUSG00000025825">
    <property type="expression patterns" value="Expressed in adrenal gland and 64 other cell types or tissues"/>
</dbReference>
<dbReference type="ExpressionAtlas" id="Q9D7P6">
    <property type="expression patterns" value="baseline and differential"/>
</dbReference>
<dbReference type="GO" id="GO:1990229">
    <property type="term" value="C:iron-sulfur cluster assembly complex"/>
    <property type="evidence" value="ECO:0000303"/>
    <property type="project" value="ComplexPortal"/>
</dbReference>
<dbReference type="GO" id="GO:0099128">
    <property type="term" value="C:mitochondrial [2Fe-2S] assembly complex"/>
    <property type="evidence" value="ECO:0000314"/>
    <property type="project" value="UniProtKB"/>
</dbReference>
<dbReference type="GO" id="GO:0005739">
    <property type="term" value="C:mitochondrion"/>
    <property type="evidence" value="ECO:0000314"/>
    <property type="project" value="MGI"/>
</dbReference>
<dbReference type="GO" id="GO:0008198">
    <property type="term" value="F:ferrous iron binding"/>
    <property type="evidence" value="ECO:0007669"/>
    <property type="project" value="Ensembl"/>
</dbReference>
<dbReference type="GO" id="GO:0051536">
    <property type="term" value="F:iron-sulfur cluster binding"/>
    <property type="evidence" value="ECO:0007669"/>
    <property type="project" value="InterPro"/>
</dbReference>
<dbReference type="GO" id="GO:0140132">
    <property type="term" value="F:iron-sulfur cluster chaperone activity"/>
    <property type="evidence" value="ECO:0007669"/>
    <property type="project" value="Ensembl"/>
</dbReference>
<dbReference type="GO" id="GO:0060090">
    <property type="term" value="F:molecular adaptor activity"/>
    <property type="evidence" value="ECO:0007669"/>
    <property type="project" value="Ensembl"/>
</dbReference>
<dbReference type="GO" id="GO:0042803">
    <property type="term" value="F:protein homodimerization activity"/>
    <property type="evidence" value="ECO:0000314"/>
    <property type="project" value="UniProtKB"/>
</dbReference>
<dbReference type="GO" id="GO:0008270">
    <property type="term" value="F:zinc ion binding"/>
    <property type="evidence" value="ECO:0000250"/>
    <property type="project" value="UniProtKB"/>
</dbReference>
<dbReference type="GO" id="GO:0044571">
    <property type="term" value="P:[2Fe-2S] cluster assembly"/>
    <property type="evidence" value="ECO:0000250"/>
    <property type="project" value="UniProtKB"/>
</dbReference>
<dbReference type="GO" id="GO:0044572">
    <property type="term" value="P:[4Fe-4S] cluster assembly"/>
    <property type="evidence" value="ECO:0000314"/>
    <property type="project" value="UniProtKB"/>
</dbReference>
<dbReference type="GO" id="GO:0006879">
    <property type="term" value="P:intracellular iron ion homeostasis"/>
    <property type="evidence" value="ECO:0000250"/>
    <property type="project" value="UniProtKB"/>
</dbReference>
<dbReference type="GO" id="GO:0016226">
    <property type="term" value="P:iron-sulfur cluster assembly"/>
    <property type="evidence" value="ECO:0000250"/>
    <property type="project" value="UniProtKB"/>
</dbReference>
<dbReference type="GO" id="GO:1904439">
    <property type="term" value="P:negative regulation of iron ion import across plasma membrane"/>
    <property type="evidence" value="ECO:0007669"/>
    <property type="project" value="Ensembl"/>
</dbReference>
<dbReference type="GO" id="GO:1902958">
    <property type="term" value="P:positive regulation of mitochondrial electron transport, NADH to ubiquinone"/>
    <property type="evidence" value="ECO:0007669"/>
    <property type="project" value="Ensembl"/>
</dbReference>
<dbReference type="CDD" id="cd06664">
    <property type="entry name" value="IscU_like"/>
    <property type="match status" value="1"/>
</dbReference>
<dbReference type="FunFam" id="3.90.1010.10:FF:000008">
    <property type="entry name" value="Iron-sulfur cluster assembly enzyme"/>
    <property type="match status" value="1"/>
</dbReference>
<dbReference type="Gene3D" id="3.90.1010.10">
    <property type="match status" value="1"/>
</dbReference>
<dbReference type="InterPro" id="IPR011339">
    <property type="entry name" value="ISCU"/>
</dbReference>
<dbReference type="InterPro" id="IPR002871">
    <property type="entry name" value="NIF_FeS_clus_asmbl_NifU_N"/>
</dbReference>
<dbReference type="NCBIfam" id="TIGR01999">
    <property type="entry name" value="iscU"/>
    <property type="match status" value="1"/>
</dbReference>
<dbReference type="PANTHER" id="PTHR10093">
    <property type="entry name" value="IRON-SULFUR CLUSTER ASSEMBLY ENZYME NIFU HOMOLOG"/>
    <property type="match status" value="1"/>
</dbReference>
<dbReference type="Pfam" id="PF01592">
    <property type="entry name" value="NifU_N"/>
    <property type="match status" value="1"/>
</dbReference>
<dbReference type="SUPFAM" id="SSF82649">
    <property type="entry name" value="SufE/NifU"/>
    <property type="match status" value="1"/>
</dbReference>
<sequence>MAAATGAGRLRRAASALLLRSPRLPARELSAPARLYHKKVVDHYENPRNVGSLDKTSKNVGTGLVGAPACGDVMKLQIQVDEKGKIVDARFKTFGCGSAIASSSLATEWVKGKTVEEALTIKNTDIAKELCLPPVKLHCSMLAEDAIKAALADYKLKQESKKEEPEKQ</sequence>
<evidence type="ECO:0000250" key="1">
    <source>
        <dbReference type="UniProtKB" id="Q9H1K1"/>
    </source>
</evidence>
<evidence type="ECO:0000255" key="2"/>
<evidence type="ECO:0000269" key="3">
    <source>
    </source>
</evidence>
<evidence type="ECO:0000269" key="4">
    <source>
    </source>
</evidence>
<evidence type="ECO:0000305" key="5"/>
<evidence type="ECO:0000312" key="6">
    <source>
        <dbReference type="MGI" id="MGI:1913633"/>
    </source>
</evidence>
<evidence type="ECO:0007744" key="7">
    <source>
        <dbReference type="PDB" id="1WFZ"/>
    </source>
</evidence>
<evidence type="ECO:0007829" key="8">
    <source>
        <dbReference type="PDB" id="1WFZ"/>
    </source>
</evidence>
<proteinExistence type="evidence at protein level"/>